<reference key="1">
    <citation type="journal article" date="2003" name="Oncogene">
        <title>Identification of a gene rearranged by 2p21 aberrations in thyroid adenomas.</title>
        <authorList>
            <person name="Rippe V."/>
            <person name="Drieschner N."/>
            <person name="Meiboom M."/>
            <person name="Murua Escobar H."/>
            <person name="Bonk U."/>
            <person name="Belge G."/>
            <person name="Bullerdiek J."/>
        </authorList>
    </citation>
    <scope>NUCLEOTIDE SEQUENCE [MRNA] (ISOFORMS 1 AND 2)</scope>
    <scope>TISSUE SPECIFICITY</scope>
    <scope>CHROMOSOMAL TRANSLOCATIONS</scope>
</reference>
<reference key="2">
    <citation type="journal article" date="2000" name="DNA Res.">
        <title>Prediction of the coding sequences of unidentified human genes. XIX. The complete sequences of 100 new cDNA clones from brain which code for large proteins in vitro.</title>
        <authorList>
            <person name="Nagase T."/>
            <person name="Kikuno R."/>
            <person name="Hattori A."/>
            <person name="Kondo Y."/>
            <person name="Okumura K."/>
            <person name="Ohara O."/>
        </authorList>
    </citation>
    <scope>NUCLEOTIDE SEQUENCE [LARGE SCALE MRNA]</scope>
    <scope>VARIANT ILE-699</scope>
    <source>
        <tissue>Brain</tissue>
    </source>
</reference>
<reference key="3">
    <citation type="journal article" date="2004" name="Nat. Genet.">
        <title>Complete sequencing and characterization of 21,243 full-length human cDNAs.</title>
        <authorList>
            <person name="Ota T."/>
            <person name="Suzuki Y."/>
            <person name="Nishikawa T."/>
            <person name="Otsuki T."/>
            <person name="Sugiyama T."/>
            <person name="Irie R."/>
            <person name="Wakamatsu A."/>
            <person name="Hayashi K."/>
            <person name="Sato H."/>
            <person name="Nagai K."/>
            <person name="Kimura K."/>
            <person name="Makita H."/>
            <person name="Sekine M."/>
            <person name="Obayashi M."/>
            <person name="Nishi T."/>
            <person name="Shibahara T."/>
            <person name="Tanaka T."/>
            <person name="Ishii S."/>
            <person name="Yamamoto J."/>
            <person name="Saito K."/>
            <person name="Kawai Y."/>
            <person name="Isono Y."/>
            <person name="Nakamura Y."/>
            <person name="Nagahari K."/>
            <person name="Murakami K."/>
            <person name="Yasuda T."/>
            <person name="Iwayanagi T."/>
            <person name="Wagatsuma M."/>
            <person name="Shiratori A."/>
            <person name="Sudo H."/>
            <person name="Hosoiri T."/>
            <person name="Kaku Y."/>
            <person name="Kodaira H."/>
            <person name="Kondo H."/>
            <person name="Sugawara M."/>
            <person name="Takahashi M."/>
            <person name="Kanda K."/>
            <person name="Yokoi T."/>
            <person name="Furuya T."/>
            <person name="Kikkawa E."/>
            <person name="Omura Y."/>
            <person name="Abe K."/>
            <person name="Kamihara K."/>
            <person name="Katsuta N."/>
            <person name="Sato K."/>
            <person name="Tanikawa M."/>
            <person name="Yamazaki M."/>
            <person name="Ninomiya K."/>
            <person name="Ishibashi T."/>
            <person name="Yamashita H."/>
            <person name="Murakawa K."/>
            <person name="Fujimori K."/>
            <person name="Tanai H."/>
            <person name="Kimata M."/>
            <person name="Watanabe M."/>
            <person name="Hiraoka S."/>
            <person name="Chiba Y."/>
            <person name="Ishida S."/>
            <person name="Ono Y."/>
            <person name="Takiguchi S."/>
            <person name="Watanabe S."/>
            <person name="Yosida M."/>
            <person name="Hotuta T."/>
            <person name="Kusano J."/>
            <person name="Kanehori K."/>
            <person name="Takahashi-Fujii A."/>
            <person name="Hara H."/>
            <person name="Tanase T.-O."/>
            <person name="Nomura Y."/>
            <person name="Togiya S."/>
            <person name="Komai F."/>
            <person name="Hara R."/>
            <person name="Takeuchi K."/>
            <person name="Arita M."/>
            <person name="Imose N."/>
            <person name="Musashino K."/>
            <person name="Yuuki H."/>
            <person name="Oshima A."/>
            <person name="Sasaki N."/>
            <person name="Aotsuka S."/>
            <person name="Yoshikawa Y."/>
            <person name="Matsunawa H."/>
            <person name="Ichihara T."/>
            <person name="Shiohata N."/>
            <person name="Sano S."/>
            <person name="Moriya S."/>
            <person name="Momiyama H."/>
            <person name="Satoh N."/>
            <person name="Takami S."/>
            <person name="Terashima Y."/>
            <person name="Suzuki O."/>
            <person name="Nakagawa S."/>
            <person name="Senoh A."/>
            <person name="Mizoguchi H."/>
            <person name="Goto Y."/>
            <person name="Shimizu F."/>
            <person name="Wakebe H."/>
            <person name="Hishigaki H."/>
            <person name="Watanabe T."/>
            <person name="Sugiyama A."/>
            <person name="Takemoto M."/>
            <person name="Kawakami B."/>
            <person name="Yamazaki M."/>
            <person name="Watanabe K."/>
            <person name="Kumagai A."/>
            <person name="Itakura S."/>
            <person name="Fukuzumi Y."/>
            <person name="Fujimori Y."/>
            <person name="Komiyama M."/>
            <person name="Tashiro H."/>
            <person name="Tanigami A."/>
            <person name="Fujiwara T."/>
            <person name="Ono T."/>
            <person name="Yamada K."/>
            <person name="Fujii Y."/>
            <person name="Ozaki K."/>
            <person name="Hirao M."/>
            <person name="Ohmori Y."/>
            <person name="Kawabata A."/>
            <person name="Hikiji T."/>
            <person name="Kobatake N."/>
            <person name="Inagaki H."/>
            <person name="Ikema Y."/>
            <person name="Okamoto S."/>
            <person name="Okitani R."/>
            <person name="Kawakami T."/>
            <person name="Noguchi S."/>
            <person name="Itoh T."/>
            <person name="Shigeta K."/>
            <person name="Senba T."/>
            <person name="Matsumura K."/>
            <person name="Nakajima Y."/>
            <person name="Mizuno T."/>
            <person name="Morinaga M."/>
            <person name="Sasaki M."/>
            <person name="Togashi T."/>
            <person name="Oyama M."/>
            <person name="Hata H."/>
            <person name="Watanabe M."/>
            <person name="Komatsu T."/>
            <person name="Mizushima-Sugano J."/>
            <person name="Satoh T."/>
            <person name="Shirai Y."/>
            <person name="Takahashi Y."/>
            <person name="Nakagawa K."/>
            <person name="Okumura K."/>
            <person name="Nagase T."/>
            <person name="Nomura N."/>
            <person name="Kikuchi H."/>
            <person name="Masuho Y."/>
            <person name="Yamashita R."/>
            <person name="Nakai K."/>
            <person name="Yada T."/>
            <person name="Nakamura Y."/>
            <person name="Ohara O."/>
            <person name="Isogai T."/>
            <person name="Sugano S."/>
        </authorList>
    </citation>
    <scope>NUCLEOTIDE SEQUENCE [LARGE SCALE MRNA] (ISOFORMS 1 AND 5)</scope>
    <scope>NUCLEOTIDE SEQUENCE [LARGE SCALE MRNA] OF 688-1953 (ISOFORM 3)</scope>
    <scope>VARIANT ILE-699</scope>
    <source>
        <tissue>Testis</tissue>
    </source>
</reference>
<reference key="4">
    <citation type="journal article" date="2005" name="Nature">
        <title>Generation and annotation of the DNA sequences of human chromosomes 2 and 4.</title>
        <authorList>
            <person name="Hillier L.W."/>
            <person name="Graves T.A."/>
            <person name="Fulton R.S."/>
            <person name="Fulton L.A."/>
            <person name="Pepin K.H."/>
            <person name="Minx P."/>
            <person name="Wagner-McPherson C."/>
            <person name="Layman D."/>
            <person name="Wylie K."/>
            <person name="Sekhon M."/>
            <person name="Becker M.C."/>
            <person name="Fewell G.A."/>
            <person name="Delehaunty K.D."/>
            <person name="Miner T.L."/>
            <person name="Nash W.E."/>
            <person name="Kremitzki C."/>
            <person name="Oddy L."/>
            <person name="Du H."/>
            <person name="Sun H."/>
            <person name="Bradshaw-Cordum H."/>
            <person name="Ali J."/>
            <person name="Carter J."/>
            <person name="Cordes M."/>
            <person name="Harris A."/>
            <person name="Isak A."/>
            <person name="van Brunt A."/>
            <person name="Nguyen C."/>
            <person name="Du F."/>
            <person name="Courtney L."/>
            <person name="Kalicki J."/>
            <person name="Ozersky P."/>
            <person name="Abbott S."/>
            <person name="Armstrong J."/>
            <person name="Belter E.A."/>
            <person name="Caruso L."/>
            <person name="Cedroni M."/>
            <person name="Cotton M."/>
            <person name="Davidson T."/>
            <person name="Desai A."/>
            <person name="Elliott G."/>
            <person name="Erb T."/>
            <person name="Fronick C."/>
            <person name="Gaige T."/>
            <person name="Haakenson W."/>
            <person name="Haglund K."/>
            <person name="Holmes A."/>
            <person name="Harkins R."/>
            <person name="Kim K."/>
            <person name="Kruchowski S.S."/>
            <person name="Strong C.M."/>
            <person name="Grewal N."/>
            <person name="Goyea E."/>
            <person name="Hou S."/>
            <person name="Levy A."/>
            <person name="Martinka S."/>
            <person name="Mead K."/>
            <person name="McLellan M.D."/>
            <person name="Meyer R."/>
            <person name="Randall-Maher J."/>
            <person name="Tomlinson C."/>
            <person name="Dauphin-Kohlberg S."/>
            <person name="Kozlowicz-Reilly A."/>
            <person name="Shah N."/>
            <person name="Swearengen-Shahid S."/>
            <person name="Snider J."/>
            <person name="Strong J.T."/>
            <person name="Thompson J."/>
            <person name="Yoakum M."/>
            <person name="Leonard S."/>
            <person name="Pearman C."/>
            <person name="Trani L."/>
            <person name="Radionenko M."/>
            <person name="Waligorski J.E."/>
            <person name="Wang C."/>
            <person name="Rock S.M."/>
            <person name="Tin-Wollam A.-M."/>
            <person name="Maupin R."/>
            <person name="Latreille P."/>
            <person name="Wendl M.C."/>
            <person name="Yang S.-P."/>
            <person name="Pohl C."/>
            <person name="Wallis J.W."/>
            <person name="Spieth J."/>
            <person name="Bieri T.A."/>
            <person name="Berkowicz N."/>
            <person name="Nelson J.O."/>
            <person name="Osborne J."/>
            <person name="Ding L."/>
            <person name="Meyer R."/>
            <person name="Sabo A."/>
            <person name="Shotland Y."/>
            <person name="Sinha P."/>
            <person name="Wohldmann P.E."/>
            <person name="Cook L.L."/>
            <person name="Hickenbotham M.T."/>
            <person name="Eldred J."/>
            <person name="Williams D."/>
            <person name="Jones T.A."/>
            <person name="She X."/>
            <person name="Ciccarelli F.D."/>
            <person name="Izaurralde E."/>
            <person name="Taylor J."/>
            <person name="Schmutz J."/>
            <person name="Myers R.M."/>
            <person name="Cox D.R."/>
            <person name="Huang X."/>
            <person name="McPherson J.D."/>
            <person name="Mardis E.R."/>
            <person name="Clifton S.W."/>
            <person name="Warren W.C."/>
            <person name="Chinwalla A.T."/>
            <person name="Eddy S.R."/>
            <person name="Marra M.A."/>
            <person name="Ovcharenko I."/>
            <person name="Furey T.S."/>
            <person name="Miller W."/>
            <person name="Eichler E.E."/>
            <person name="Bork P."/>
            <person name="Suyama M."/>
            <person name="Torrents D."/>
            <person name="Waterston R.H."/>
            <person name="Wilson R.K."/>
        </authorList>
    </citation>
    <scope>NUCLEOTIDE SEQUENCE [LARGE SCALE GENOMIC DNA]</scope>
</reference>
<reference key="5">
    <citation type="journal article" date="2004" name="Genome Res.">
        <title>The status, quality, and expansion of the NIH full-length cDNA project: the Mammalian Gene Collection (MGC).</title>
        <authorList>
            <consortium name="The MGC Project Team"/>
        </authorList>
    </citation>
    <scope>NUCLEOTIDE SEQUENCE [LARGE SCALE MRNA] (ISOFORMS 4 AND 6)</scope>
    <scope>NUCLEOTIDE SEQUENCE [LARGE SCALE MRNA] OF 1118-1953 (ISOFORM 1)</scope>
    <scope>VARIANTS SER-1385 AND TYR-1605</scope>
    <source>
        <tissue>Brain</tissue>
        <tissue>Pancreas</tissue>
        <tissue>Skin</tissue>
        <tissue>Uterus</tissue>
    </source>
</reference>
<reference key="6">
    <citation type="submission" date="2000-11" db="EMBL/GenBank/DDBJ databases">
        <title>Novel protein interacting with death receptor.</title>
        <authorList>
            <person name="Puduvalli V.K."/>
            <person name="Ridgway L."/>
        </authorList>
    </citation>
    <scope>NUCLEOTIDE SEQUENCE [MRNA] OF 1311-1953</scope>
</reference>
<reference key="7">
    <citation type="journal article" date="2007" name="Gene">
        <title>A domain of the thyroid adenoma associated gene (THADA) conserved in vertebrates becomes destroyed by chromosomal rearrangements observed in thyroid adenomas.</title>
        <authorList>
            <person name="Drieschner N."/>
            <person name="Kerschling S."/>
            <person name="Soller J.T."/>
            <person name="Rippe V."/>
            <person name="Belge G."/>
            <person name="Bullerdiek J."/>
            <person name="Nimzyk R."/>
        </authorList>
    </citation>
    <scope>CHROMOSOMAL TRANSLOCATIONS</scope>
</reference>
<reference key="8">
    <citation type="journal article" date="2008" name="Mol. Cell">
        <title>Kinase-selective enrichment enables quantitative phosphoproteomics of the kinome across the cell cycle.</title>
        <authorList>
            <person name="Daub H."/>
            <person name="Olsen J.V."/>
            <person name="Bairlein M."/>
            <person name="Gnad F."/>
            <person name="Oppermann F.S."/>
            <person name="Korner R."/>
            <person name="Greff Z."/>
            <person name="Keri G."/>
            <person name="Stemmann O."/>
            <person name="Mann M."/>
        </authorList>
    </citation>
    <scope>PHOSPHORYLATION [LARGE SCALE ANALYSIS] AT SER-1161</scope>
    <scope>IDENTIFICATION BY MASS SPECTROMETRY [LARGE SCALE ANALYSIS]</scope>
    <source>
        <tissue>Cervix carcinoma</tissue>
    </source>
</reference>
<reference key="9">
    <citation type="journal article" date="2010" name="Sci. Signal.">
        <title>Quantitative phosphoproteomics reveals widespread full phosphorylation site occupancy during mitosis.</title>
        <authorList>
            <person name="Olsen J.V."/>
            <person name="Vermeulen M."/>
            <person name="Santamaria A."/>
            <person name="Kumar C."/>
            <person name="Miller M.L."/>
            <person name="Jensen L.J."/>
            <person name="Gnad F."/>
            <person name="Cox J."/>
            <person name="Jensen T.S."/>
            <person name="Nigg E.A."/>
            <person name="Brunak S."/>
            <person name="Mann M."/>
        </authorList>
    </citation>
    <scope>PHOSPHORYLATION [LARGE SCALE ANALYSIS] AT SER-1024</scope>
    <scope>IDENTIFICATION BY MASS SPECTROMETRY [LARGE SCALE ANALYSIS]</scope>
    <source>
        <tissue>Cervix carcinoma</tissue>
    </source>
</reference>
<reference key="10">
    <citation type="journal article" date="2011" name="BMC Syst. Biol.">
        <title>Initial characterization of the human central proteome.</title>
        <authorList>
            <person name="Burkard T.R."/>
            <person name="Planyavsky M."/>
            <person name="Kaupe I."/>
            <person name="Breitwieser F.P."/>
            <person name="Buerckstuemmer T."/>
            <person name="Bennett K.L."/>
            <person name="Superti-Furga G."/>
            <person name="Colinge J."/>
        </authorList>
    </citation>
    <scope>IDENTIFICATION BY MASS SPECTROMETRY [LARGE SCALE ANALYSIS]</scope>
</reference>
<reference key="11">
    <citation type="journal article" date="2013" name="J. Proteome Res.">
        <title>Toward a comprehensive characterization of a human cancer cell phosphoproteome.</title>
        <authorList>
            <person name="Zhou H."/>
            <person name="Di Palma S."/>
            <person name="Preisinger C."/>
            <person name="Peng M."/>
            <person name="Polat A.N."/>
            <person name="Heck A.J."/>
            <person name="Mohammed S."/>
        </authorList>
    </citation>
    <scope>PHOSPHORYLATION [LARGE SCALE ANALYSIS] AT SER-1015</scope>
    <scope>IDENTIFICATION BY MASS SPECTROMETRY [LARGE SCALE ANALYSIS]</scope>
    <source>
        <tissue>Cervix carcinoma</tissue>
    </source>
</reference>
<reference key="12">
    <citation type="journal article" date="2015" name="RNA">
        <title>Conservation of an intricate circuit for crucial modifications of the tRNAPhe anticodon loop in eukaryotes.</title>
        <authorList>
            <person name="Guy M.P."/>
            <person name="Phizicky E.M."/>
        </authorList>
    </citation>
    <scope>FUNCTION</scope>
</reference>
<proteinExistence type="evidence at protein level"/>
<keyword id="KW-0002">3D-structure</keyword>
<keyword id="KW-0025">Alternative splicing</keyword>
<keyword id="KW-0160">Chromosomal rearrangement</keyword>
<keyword id="KW-0175">Coiled coil</keyword>
<keyword id="KW-0597">Phosphoprotein</keyword>
<keyword id="KW-1267">Proteomics identification</keyword>
<keyword id="KW-1185">Reference proteome</keyword>
<keyword id="KW-0819">tRNA processing</keyword>
<comment type="function">
    <text evidence="6">Together with methyltransferase FTSJ1, methylates the 2'-O-ribose of nucleotides at position 32 of the anticodon loop of substrate tRNAs.</text>
</comment>
<comment type="interaction">
    <interactant intactId="EBI-2824523">
        <id>Q6YHU6</id>
    </interactant>
    <interactant intactId="EBI-11954292">
        <id>Q86V38</id>
        <label>ATN1</label>
    </interactant>
    <organismsDiffer>false</organismsDiffer>
    <experiments>3</experiments>
</comment>
<comment type="interaction">
    <interactant intactId="EBI-2824523">
        <id>Q6YHU6</id>
    </interactant>
    <interactant intactId="EBI-2432309">
        <id>Q92876</id>
        <label>KLK6</label>
    </interactant>
    <organismsDiffer>false</organismsDiffer>
    <experiments>3</experiments>
</comment>
<comment type="interaction">
    <interactant intactId="EBI-2824523">
        <id>Q6YHU6</id>
    </interactant>
    <interactant intactId="EBI-748974">
        <id>Q96CV9</id>
        <label>OPTN</label>
    </interactant>
    <organismsDiffer>false</organismsDiffer>
    <experiments>3</experiments>
</comment>
<comment type="interaction">
    <interactant intactId="EBI-2824523">
        <id>Q6YHU6</id>
    </interactant>
    <interactant intactId="EBI-739895">
        <id>Q8N6Y0</id>
        <label>USHBP1</label>
    </interactant>
    <organismsDiffer>false</organismsDiffer>
    <experiments>3</experiments>
</comment>
<comment type="interaction">
    <interactant intactId="EBI-12232803">
        <id>Q6YHU6-6</id>
    </interactant>
    <interactant intactId="EBI-12029004">
        <id>P78424</id>
        <label>POU6F2</label>
    </interactant>
    <organismsDiffer>false</organismsDiffer>
    <experiments>3</experiments>
</comment>
<comment type="alternative products">
    <event type="alternative splicing"/>
    <isoform>
        <id>Q6YHU6-1</id>
        <name>1</name>
        <sequence type="displayed"/>
    </isoform>
    <isoform>
        <id>Q6YHU6-2</id>
        <name>2</name>
        <name>GITA-A2</name>
        <sequence type="described" ref="VSP_034731 VSP_034734"/>
    </isoform>
    <isoform>
        <id>Q6YHU6-3</id>
        <name>3</name>
        <sequence type="described" ref="VSP_034735"/>
    </isoform>
    <isoform>
        <id>Q6YHU6-4</id>
        <name>4</name>
        <sequence type="described" ref="VSP_034730"/>
    </isoform>
    <isoform>
        <id>Q6YHU6-5</id>
        <name>5</name>
        <sequence type="described" ref="VSP_034732 VSP_034733"/>
    </isoform>
    <isoform>
        <id>Q6YHU6-6</id>
        <name>6</name>
        <sequence type="described" ref="VSP_054421 VSP_054422"/>
    </isoform>
</comment>
<comment type="tissue specificity">
    <text evidence="3">Expressed in pancreas, adrenal medulla, thyroid, adrenal cortex, testis, thymus, small intestine and stomach.</text>
</comment>
<comment type="disease">
    <text>Chromosomal aberrations involving THADA have been observed in benign thyroid adenomas. Translocation t(2;3)(p21;p25) and translocation t(2;7)(p21;p15); the sequences derived from chromosomes 3p25 and 7p15 do not appear to include a coding region and the fusion events probably result in truncated THADA proteins.</text>
</comment>
<comment type="similarity">
    <text evidence="10">Belongs to the THADA family.</text>
</comment>
<comment type="sequence caution" evidence="10">
    <conflict type="erroneous initiation">
        <sequence resource="EMBL-CDS" id="BAB15133"/>
    </conflict>
</comment>
<comment type="sequence caution" evidence="10">
    <conflict type="erroneous initiation">
        <sequence resource="EMBL-CDS" id="BAB15162"/>
    </conflict>
</comment>
<comment type="sequence caution" evidence="10">
    <conflict type="erroneous initiation">
        <sequence resource="EMBL-CDS" id="BAB21858"/>
    </conflict>
</comment>
<protein>
    <recommendedName>
        <fullName evidence="10">tRNA (32-2'-O)-methyltransferase regulator THADA</fullName>
    </recommendedName>
    <alternativeName>
        <fullName>Gene inducing thyroid adenomas protein</fullName>
    </alternativeName>
    <alternativeName>
        <fullName>Thyroid adenoma-associated protein</fullName>
    </alternativeName>
</protein>
<accession>Q6YHU6</accession>
<accession>A8K1V8</accession>
<accession>B7WNS6</accession>
<accession>Q3KR04</accession>
<accession>Q53RC6</accession>
<accession>Q53TB2</accession>
<accession>Q6YHU2</accession>
<accession>Q6ZU38</accession>
<accession>Q8IY32</accession>
<accession>Q8TAU8</accession>
<accession>Q96I88</accession>
<accession>Q9BZF7</accession>
<accession>Q9C096</accession>
<accession>Q9H6U0</accession>
<accession>Q9H6W7</accession>
<name>THADA_HUMAN</name>
<organism>
    <name type="scientific">Homo sapiens</name>
    <name type="common">Human</name>
    <dbReference type="NCBI Taxonomy" id="9606"/>
    <lineage>
        <taxon>Eukaryota</taxon>
        <taxon>Metazoa</taxon>
        <taxon>Chordata</taxon>
        <taxon>Craniata</taxon>
        <taxon>Vertebrata</taxon>
        <taxon>Euteleostomi</taxon>
        <taxon>Mammalia</taxon>
        <taxon>Eutheria</taxon>
        <taxon>Euarchontoglires</taxon>
        <taxon>Primates</taxon>
        <taxon>Haplorrhini</taxon>
        <taxon>Catarrhini</taxon>
        <taxon>Hominidae</taxon>
        <taxon>Homo</taxon>
    </lineage>
</organism>
<gene>
    <name type="primary">THADA</name>
    <name type="synonym">GITA</name>
    <name type="synonym">KIAA1767</name>
</gene>
<sequence>MGVKKKKEMQVAALTICHQDLETLKSFADVEGKNLASLLLHCVQLTDGVSQIHYIKQIVPLLEKADKNGMCDPTIQSCLDILAGIYLSLSLKNPLKKVLASSLNSLPDFFLPEAMHRFTSRLQEELNTTDLYSYRKVTDNISSCMENFNLGRASVNNLLKNVLHFLQKSLIEILEENRKCAGNHIIQTQLMNDLLVGIRVSMMLVQKVQDFQGNLWKTSDSPIWQNMCGLLSIFTKVLSDDDLLQTVQSTSGLAIILFIKTMFHPSEKIPHLISSVLLRSVDCTSVPEWFMSSCRSLCCGDISQSAVLFLCQGTLAMLDWQNGSMGRSGEALLLDTAHVLFTLSSQIKEPTLEMFLSRILASWTNSAIQVLESSSPSLTDSLNGNSSIVGRLLEYVYTHWEHPLDALRHQTKIMFKNLLQMHRLTVEGADFVPDPFFVELTESLLRLEWHIKGKYTCLGCLVECIGVEHILAIDKTIPSQILEVMGDQSLVPYASDLLETMFRNHKSHLKSQTAESSWIDQWHETWVSPLLFILCEGNLDQKSYVIDYYLPKLLSYSPESLQYMVKILQTSIDAKTGQEQSFPSLGSCNSRGALGALMACLRIARAHGHLQSATDTWENLVSDARIKQGLIHQHCQVRIDTLGLLCESNRSTEIVSMEEMQWIQFFITYNLNSQSPGVRQQICSLLKKLFCRIQESSQVLYKLEQSKSKREPENELTKQHPSVSLQQYKNFMSSICNSLFEALFPGSSYSTRFSALTILGSIAEVFHVPEGRIYTVYQLSHDIDVGRFQTLMECFTSTFEDVKILAFDLLMKLSKTAVHFQDSGKLQGLFQAALELSTSTKPYDCVTASYLLNFLIWQDALPSSLSAYLTQQVACDNGDRPAAVVERNTLMVIKCLMENLEEEVSQAENSLLQAAAAFPMYGRVHCITGALQKLSLNSLQLVSEWRPVVEKLLLMSYRLSTVVSPVIQSSSPEGLIPMDTDSESASRLQMILNEIQPRDTNDYFNQAKILKEHDSFDMKDLNASVVNIDTSTEIKGKEVKTCDVTAQMVLVCCWRSMKEVALLLGMLCQLLPMQPVPESSDGLLTVEQVKEIGDYFKQHLLQSRHRGAFELAYTGFVKLTEVLNRCPNVSLQKLPEQWLWSVLEEIKCSDPSSKLCATRRSAGIPFYIQALLASEPKKGRMDLLKITMKELISLAGPTDDIQSTVPQVHALNILRALFRDTRLGENIIPYVADGAKAAILGFTSPVWAVRNSSTLLFSALITRIFGVKRAKDEHSKTNRMTGREFFSRFPELYPFLLKQLETVANTVDSDMGEPNRHPSMFLLLLVLERLYASPMDGTSSALSMGPFVPFIMRCGHSPVYHSREMAARALVPFVMIDHIPNTIRTLLSTLPSCTDQCFRQNHIHGTLLQVFHLLQAYSDSKHGTNSDFQHELTDITVCTKAKLWLAKRQNPCLVTRAVYIDILFLLTCCLNRSAKDNQPVLESLGFWEEVRGIISGSELITGFPWAFKVPGLPQYLQSLTRLAIAAVWAAAAKSGERETNVPISFSQLLESAFPEVRSLTLEALLEKFLAAASGLGEKGVPPLLCNMGEKFLLLAMKENHPECFCKILKILHCMDPGEWLPQTEHCVHLTPKEFLIWTMDIASNERSEIQSVALRLASKVISHHMQTCVENRELIAAELKQWVQLVILSCEDHLPTESRLAVVEVLTSTTPLFLTNPHPILELQDTLALWKCVLTLLQSEEQAVRDAATETVTTAMSQENTCQSTEFAFCQVDASIALALALAVLCDLLQQWDQLAPGLPILLGWLLGESDDLVACVESMHQVEEDYLFEKAEVNFWAETLIFVKYLCKHLFCLLSKSGWRPPSPEMLCHLQRMVSEQCHLLSQFFRELPPAAEFVKTVEFTRLRIQEERTLACLRLLAFLEGKEGEDTLVLSVWDSYAESRQLTLPRTEAAC</sequence>
<evidence type="ECO:0000255" key="1"/>
<evidence type="ECO:0000269" key="2">
    <source>
    </source>
</evidence>
<evidence type="ECO:0000269" key="3">
    <source>
    </source>
</evidence>
<evidence type="ECO:0000269" key="4">
    <source>
    </source>
</evidence>
<evidence type="ECO:0000269" key="5">
    <source>
    </source>
</evidence>
<evidence type="ECO:0000269" key="6">
    <source>
    </source>
</evidence>
<evidence type="ECO:0000303" key="7">
    <source>
    </source>
</evidence>
<evidence type="ECO:0000303" key="8">
    <source>
    </source>
</evidence>
<evidence type="ECO:0000303" key="9">
    <source>
    </source>
</evidence>
<evidence type="ECO:0000305" key="10"/>
<evidence type="ECO:0007744" key="11">
    <source>
    </source>
</evidence>
<evidence type="ECO:0007744" key="12">
    <source>
    </source>
</evidence>
<evidence type="ECO:0007744" key="13">
    <source>
    </source>
</evidence>
<evidence type="ECO:0007829" key="14">
    <source>
        <dbReference type="PDB" id="5T6Y"/>
    </source>
</evidence>
<dbReference type="EMBL" id="AY149629">
    <property type="protein sequence ID" value="AAO46785.1"/>
    <property type="molecule type" value="mRNA"/>
</dbReference>
<dbReference type="EMBL" id="AY149633">
    <property type="protein sequence ID" value="AAO46789.1"/>
    <property type="molecule type" value="mRNA"/>
</dbReference>
<dbReference type="EMBL" id="AB051554">
    <property type="protein sequence ID" value="BAB21858.2"/>
    <property type="status" value="ALT_INIT"/>
    <property type="molecule type" value="mRNA"/>
</dbReference>
<dbReference type="EMBL" id="AK025530">
    <property type="protein sequence ID" value="BAB15162.1"/>
    <property type="status" value="ALT_INIT"/>
    <property type="molecule type" value="mRNA"/>
</dbReference>
<dbReference type="EMBL" id="AK025445">
    <property type="protein sequence ID" value="BAB15133.1"/>
    <property type="status" value="ALT_INIT"/>
    <property type="molecule type" value="mRNA"/>
</dbReference>
<dbReference type="EMBL" id="AK126004">
    <property type="protein sequence ID" value="BAC86389.1"/>
    <property type="molecule type" value="mRNA"/>
</dbReference>
<dbReference type="EMBL" id="AK290023">
    <property type="protein sequence ID" value="BAF82712.1"/>
    <property type="molecule type" value="mRNA"/>
</dbReference>
<dbReference type="EMBL" id="AC010883">
    <property type="protein sequence ID" value="AAY14994.1"/>
    <property type="molecule type" value="Genomic_DNA"/>
</dbReference>
<dbReference type="EMBL" id="AC092615">
    <property type="protein sequence ID" value="AAX93152.1"/>
    <property type="molecule type" value="Genomic_DNA"/>
</dbReference>
<dbReference type="EMBL" id="AC092838">
    <property type="protein sequence ID" value="AAX93154.1"/>
    <property type="molecule type" value="Genomic_DNA"/>
</dbReference>
<dbReference type="EMBL" id="AC104138">
    <property type="status" value="NOT_ANNOTATED_CDS"/>
    <property type="molecule type" value="Genomic_DNA"/>
</dbReference>
<dbReference type="EMBL" id="BC007743">
    <property type="protein sequence ID" value="AAH07743.1"/>
    <property type="molecule type" value="mRNA"/>
</dbReference>
<dbReference type="EMBL" id="BC025773">
    <property type="protein sequence ID" value="AAH25773.1"/>
    <property type="molecule type" value="mRNA"/>
</dbReference>
<dbReference type="EMBL" id="BC037990">
    <property type="protein sequence ID" value="AAH37990.1"/>
    <property type="molecule type" value="mRNA"/>
</dbReference>
<dbReference type="EMBL" id="BC105976">
    <property type="protein sequence ID" value="AAI05977.1"/>
    <property type="molecule type" value="mRNA"/>
</dbReference>
<dbReference type="EMBL" id="AF323176">
    <property type="protein sequence ID" value="AAK11318.1"/>
    <property type="molecule type" value="mRNA"/>
</dbReference>
<dbReference type="CCDS" id="CCDS46268.1">
    <molecule id="Q6YHU6-1"/>
</dbReference>
<dbReference type="CCDS" id="CCDS62901.1">
    <molecule id="Q6YHU6-6"/>
</dbReference>
<dbReference type="CCDS" id="CCDS62902.1">
    <molecule id="Q6YHU6-5"/>
</dbReference>
<dbReference type="RefSeq" id="NP_001077422.1">
    <molecule id="Q6YHU6-1"/>
    <property type="nucleotide sequence ID" value="NM_001083953.2"/>
</dbReference>
<dbReference type="RefSeq" id="NP_001258572.1">
    <molecule id="Q6YHU6-5"/>
    <property type="nucleotide sequence ID" value="NM_001271643.2"/>
</dbReference>
<dbReference type="RefSeq" id="NP_001258573.1">
    <molecule id="Q6YHU6-6"/>
    <property type="nucleotide sequence ID" value="NM_001271644.2"/>
</dbReference>
<dbReference type="RefSeq" id="NP_001332854.1">
    <molecule id="Q6YHU6-1"/>
    <property type="nucleotide sequence ID" value="NM_001345925.2"/>
</dbReference>
<dbReference type="RefSeq" id="NP_071348.3">
    <molecule id="Q6YHU6-1"/>
    <property type="nucleotide sequence ID" value="NM_022065.4"/>
</dbReference>
<dbReference type="RefSeq" id="XP_006712128.1">
    <property type="nucleotide sequence ID" value="XM_006712065.1"/>
</dbReference>
<dbReference type="PDB" id="5T6Y">
    <property type="method" value="X-ray"/>
    <property type="resolution" value="1.76 A"/>
    <property type="chains" value="C=796-807"/>
</dbReference>
<dbReference type="PDBsum" id="5T6Y"/>
<dbReference type="SMR" id="Q6YHU6"/>
<dbReference type="BioGRID" id="121972">
    <property type="interactions" value="168"/>
</dbReference>
<dbReference type="FunCoup" id="Q6YHU6">
    <property type="interactions" value="1723"/>
</dbReference>
<dbReference type="IntAct" id="Q6YHU6">
    <property type="interactions" value="81"/>
</dbReference>
<dbReference type="MINT" id="Q6YHU6"/>
<dbReference type="STRING" id="9606.ENSP00000385995"/>
<dbReference type="GlyGen" id="Q6YHU6">
    <property type="glycosylation" value="1 site, 1 O-linked glycan (1 site)"/>
</dbReference>
<dbReference type="iPTMnet" id="Q6YHU6"/>
<dbReference type="PhosphoSitePlus" id="Q6YHU6"/>
<dbReference type="BioMuta" id="THADA"/>
<dbReference type="DMDM" id="74749519"/>
<dbReference type="jPOST" id="Q6YHU6"/>
<dbReference type="MassIVE" id="Q6YHU6"/>
<dbReference type="PaxDb" id="9606-ENSP00000385995"/>
<dbReference type="PeptideAtlas" id="Q6YHU6"/>
<dbReference type="ProteomicsDB" id="67846">
    <molecule id="Q6YHU6-1"/>
</dbReference>
<dbReference type="ProteomicsDB" id="67847">
    <molecule id="Q6YHU6-2"/>
</dbReference>
<dbReference type="ProteomicsDB" id="67848">
    <molecule id="Q6YHU6-3"/>
</dbReference>
<dbReference type="ProteomicsDB" id="67849">
    <molecule id="Q6YHU6-4"/>
</dbReference>
<dbReference type="ProteomicsDB" id="67850">
    <molecule id="Q6YHU6-5"/>
</dbReference>
<dbReference type="ProteomicsDB" id="71096"/>
<dbReference type="Pumba" id="Q6YHU6"/>
<dbReference type="Antibodypedia" id="47396">
    <property type="antibodies" value="109 antibodies from 21 providers"/>
</dbReference>
<dbReference type="DNASU" id="63892"/>
<dbReference type="Ensembl" id="ENST00000402360.6">
    <molecule id="Q6YHU6-5"/>
    <property type="protein sequence ID" value="ENSP00000385441.2"/>
    <property type="gene ID" value="ENSG00000115970.19"/>
</dbReference>
<dbReference type="Ensembl" id="ENST00000404790.5">
    <molecule id="Q6YHU6-6"/>
    <property type="protein sequence ID" value="ENSP00000384266.1"/>
    <property type="gene ID" value="ENSG00000115970.19"/>
</dbReference>
<dbReference type="Ensembl" id="ENST00000405006.8">
    <molecule id="Q6YHU6-1"/>
    <property type="protein sequence ID" value="ENSP00000385995.4"/>
    <property type="gene ID" value="ENSG00000115970.19"/>
</dbReference>
<dbReference type="Ensembl" id="ENST00000405975.7">
    <molecule id="Q6YHU6-1"/>
    <property type="protein sequence ID" value="ENSP00000386088.2"/>
    <property type="gene ID" value="ENSG00000115970.19"/>
</dbReference>
<dbReference type="GeneID" id="63892"/>
<dbReference type="KEGG" id="hsa:63892"/>
<dbReference type="MANE-Select" id="ENST00000405975.7">
    <property type="protein sequence ID" value="ENSP00000386088.2"/>
    <property type="RefSeq nucleotide sequence ID" value="NM_022065.5"/>
    <property type="RefSeq protein sequence ID" value="NP_071348.3"/>
</dbReference>
<dbReference type="UCSC" id="uc002rsw.5">
    <molecule id="Q6YHU6-1"/>
    <property type="organism name" value="human"/>
</dbReference>
<dbReference type="AGR" id="HGNC:19217"/>
<dbReference type="CTD" id="63892"/>
<dbReference type="DisGeNET" id="63892"/>
<dbReference type="GeneCards" id="THADA"/>
<dbReference type="HGNC" id="HGNC:19217">
    <property type="gene designation" value="THADA"/>
</dbReference>
<dbReference type="HPA" id="ENSG00000115970">
    <property type="expression patterns" value="Low tissue specificity"/>
</dbReference>
<dbReference type="MalaCards" id="THADA"/>
<dbReference type="MIM" id="611800">
    <property type="type" value="gene"/>
</dbReference>
<dbReference type="neXtProt" id="NX_Q6YHU6"/>
<dbReference type="OpenTargets" id="ENSG00000115970"/>
<dbReference type="PharmGKB" id="PA134882460"/>
<dbReference type="VEuPathDB" id="HostDB:ENSG00000115970"/>
<dbReference type="eggNOG" id="KOG1810">
    <property type="taxonomic scope" value="Eukaryota"/>
</dbReference>
<dbReference type="GeneTree" id="ENSGT00390000015500"/>
<dbReference type="HOGENOM" id="CLU_002048_0_0_1"/>
<dbReference type="InParanoid" id="Q6YHU6"/>
<dbReference type="OMA" id="CTSIPEW"/>
<dbReference type="OrthoDB" id="73997at2759"/>
<dbReference type="PAN-GO" id="Q6YHU6">
    <property type="GO annotations" value="1 GO annotation based on evolutionary models"/>
</dbReference>
<dbReference type="PhylomeDB" id="Q6YHU6"/>
<dbReference type="TreeFam" id="TF319713"/>
<dbReference type="PathwayCommons" id="Q6YHU6"/>
<dbReference type="Reactome" id="R-HSA-6782315">
    <property type="pathway name" value="tRNA modification in the nucleus and cytosol"/>
</dbReference>
<dbReference type="SignaLink" id="Q6YHU6"/>
<dbReference type="BioGRID-ORCS" id="63892">
    <property type="hits" value="10 hits in 1155 CRISPR screens"/>
</dbReference>
<dbReference type="ChiTaRS" id="THADA">
    <property type="organism name" value="human"/>
</dbReference>
<dbReference type="GenomeRNAi" id="63892"/>
<dbReference type="Pharos" id="Q6YHU6">
    <property type="development level" value="Tbio"/>
</dbReference>
<dbReference type="PRO" id="PR:Q6YHU6"/>
<dbReference type="Proteomes" id="UP000005640">
    <property type="component" value="Chromosome 2"/>
</dbReference>
<dbReference type="RNAct" id="Q6YHU6">
    <property type="molecule type" value="protein"/>
</dbReference>
<dbReference type="Bgee" id="ENSG00000115970">
    <property type="expression patterns" value="Expressed in calcaneal tendon and 191 other cell types or tissues"/>
</dbReference>
<dbReference type="ExpressionAtlas" id="Q6YHU6">
    <property type="expression patterns" value="baseline and differential"/>
</dbReference>
<dbReference type="GO" id="GO:0098554">
    <property type="term" value="C:cytoplasmic side of endoplasmic reticulum membrane"/>
    <property type="evidence" value="ECO:0000250"/>
    <property type="project" value="FlyBase"/>
</dbReference>
<dbReference type="GO" id="GO:0030234">
    <property type="term" value="F:enzyme regulator activity"/>
    <property type="evidence" value="ECO:0000316"/>
    <property type="project" value="UniProtKB"/>
</dbReference>
<dbReference type="GO" id="GO:1990845">
    <property type="term" value="P:adaptive thermogenesis"/>
    <property type="evidence" value="ECO:0000250"/>
    <property type="project" value="FlyBase"/>
</dbReference>
<dbReference type="GO" id="GO:0055088">
    <property type="term" value="P:lipid homeostasis"/>
    <property type="evidence" value="ECO:0000316"/>
    <property type="project" value="FlyBase"/>
</dbReference>
<dbReference type="GO" id="GO:0032471">
    <property type="term" value="P:negative regulation of endoplasmic reticulum calcium ion concentration"/>
    <property type="evidence" value="ECO:0000315"/>
    <property type="project" value="FlyBase"/>
</dbReference>
<dbReference type="GO" id="GO:0030488">
    <property type="term" value="P:tRNA methylation"/>
    <property type="evidence" value="ECO:0000316"/>
    <property type="project" value="UniProtKB"/>
</dbReference>
<dbReference type="GO" id="GO:0002128">
    <property type="term" value="P:tRNA nucleoside ribose methylation"/>
    <property type="evidence" value="ECO:0000316"/>
    <property type="project" value="UniProtKB"/>
</dbReference>
<dbReference type="InterPro" id="IPR016024">
    <property type="entry name" value="ARM-type_fold"/>
</dbReference>
<dbReference type="InterPro" id="IPR056843">
    <property type="entry name" value="THADA-like_TPR"/>
</dbReference>
<dbReference type="InterPro" id="IPR056842">
    <property type="entry name" value="THADA-like_TPR_C"/>
</dbReference>
<dbReference type="InterPro" id="IPR019442">
    <property type="entry name" value="THADA/TRM732_DUF2428"/>
</dbReference>
<dbReference type="InterPro" id="IPR051954">
    <property type="entry name" value="tRNA_methyltransferase_THADA"/>
</dbReference>
<dbReference type="PANTHER" id="PTHR14387">
    <property type="entry name" value="THADA/DEATH RECEPTOR INTERACTING PROTEIN"/>
    <property type="match status" value="1"/>
</dbReference>
<dbReference type="PANTHER" id="PTHR14387:SF7">
    <property type="entry name" value="THYROID ADENOMA-ASSOCIATED PROTEIN"/>
    <property type="match status" value="1"/>
</dbReference>
<dbReference type="Pfam" id="PF10350">
    <property type="entry name" value="DUF2428"/>
    <property type="match status" value="1"/>
</dbReference>
<dbReference type="Pfam" id="PF25150">
    <property type="entry name" value="TPR_Trm732"/>
    <property type="match status" value="1"/>
</dbReference>
<dbReference type="Pfam" id="PF25151">
    <property type="entry name" value="TPR_Trm732_C"/>
    <property type="match status" value="1"/>
</dbReference>
<dbReference type="SUPFAM" id="SSF48371">
    <property type="entry name" value="ARM repeat"/>
    <property type="match status" value="2"/>
</dbReference>
<feature type="chain" id="PRO_0000344057" description="tRNA (32-2'-O)-methyltransferase regulator THADA">
    <location>
        <begin position="1"/>
        <end position="1953"/>
    </location>
</feature>
<feature type="coiled-coil region" evidence="1">
    <location>
        <begin position="886"/>
        <end position="918"/>
    </location>
</feature>
<feature type="modified residue" description="Phosphoserine" evidence="13">
    <location>
        <position position="1015"/>
    </location>
</feature>
<feature type="modified residue" description="Phosphoserine" evidence="12">
    <location>
        <position position="1024"/>
    </location>
</feature>
<feature type="modified residue" description="Phosphoserine" evidence="11">
    <location>
        <position position="1161"/>
    </location>
</feature>
<feature type="splice variant" id="VSP_034730" description="In isoform 4." evidence="9">
    <location>
        <begin position="1"/>
        <end position="1279"/>
    </location>
</feature>
<feature type="splice variant" id="VSP_034731" description="In isoform 2." evidence="7">
    <location>
        <begin position="1"/>
        <end position="290"/>
    </location>
</feature>
<feature type="splice variant" id="VSP_054421" description="In isoform 6." evidence="9">
    <original>VIK</original>
    <variation>GLY</variation>
    <location>
        <begin position="892"/>
        <end position="894"/>
    </location>
</feature>
<feature type="splice variant" id="VSP_054422" description="In isoform 6." evidence="9">
    <location>
        <begin position="895"/>
        <end position="1953"/>
    </location>
</feature>
<feature type="splice variant" id="VSP_034732" description="In isoform 5." evidence="8">
    <original>N</original>
    <variation>K</variation>
    <location>
        <position position="937"/>
    </location>
</feature>
<feature type="splice variant" id="VSP_034733" description="In isoform 5." evidence="8">
    <location>
        <begin position="938"/>
        <end position="1953"/>
    </location>
</feature>
<feature type="splice variant" id="VSP_034734" description="In isoform 2." evidence="7">
    <location>
        <begin position="1249"/>
        <end position="1279"/>
    </location>
</feature>
<feature type="splice variant" id="VSP_034735" description="In isoform 3." evidence="8">
    <location>
        <begin position="1280"/>
        <end position="1353"/>
    </location>
</feature>
<feature type="sequence variant" id="VAR_054070" description="In dbSNP:rs10210191.">
    <original>E</original>
    <variation>G</variation>
    <location>
        <position position="63"/>
    </location>
</feature>
<feature type="sequence variant" id="VAR_054071" description="In dbSNP:rs17031056." evidence="2 4">
    <original>V</original>
    <variation>I</variation>
    <location>
        <position position="699"/>
    </location>
</feature>
<feature type="sequence variant" id="VAR_054072" description="In dbSNP:rs7578597.">
    <original>T</original>
    <variation>A</variation>
    <location>
        <position position="1187"/>
    </location>
</feature>
<feature type="sequence variant" id="VAR_054073" description="In dbSNP:rs33979934." evidence="5">
    <original>T</original>
    <variation>S</variation>
    <location>
        <position position="1385"/>
    </location>
</feature>
<feature type="sequence variant" id="VAR_054074" description="In dbSNP:rs17334247.">
    <original>P</original>
    <variation>S</variation>
    <location>
        <position position="1451"/>
    </location>
</feature>
<feature type="sequence variant" id="VAR_054075" description="In dbSNP:rs35720761." evidence="5">
    <original>C</original>
    <variation>Y</variation>
    <location>
        <position position="1605"/>
    </location>
</feature>
<feature type="sequence variant" id="VAR_054076" description="In dbSNP:rs17030648.">
    <original>C</original>
    <variation>R</variation>
    <location>
        <position position="1668"/>
    </location>
</feature>
<feature type="sequence conflict" description="In Ref. 3; BAC86389." evidence="10" ref="3">
    <original>Q</original>
    <variation>R</variation>
    <location>
        <position position="245"/>
    </location>
</feature>
<feature type="sequence conflict" description="In Ref. 3; BAB15133." evidence="10" ref="3">
    <original>F</original>
    <variation>L</variation>
    <location>
        <position position="1507"/>
    </location>
</feature>
<feature type="sequence conflict" description="In Ref. 3; BAB15133." evidence="10" ref="3">
    <original>T</original>
    <variation>I</variation>
    <location>
        <position position="1709"/>
    </location>
</feature>
<feature type="helix" evidence="14">
    <location>
        <begin position="802"/>
        <end position="805"/>
    </location>
</feature>